<proteinExistence type="inferred from homology"/>
<name>RL16_STRP6</name>
<keyword id="KW-0687">Ribonucleoprotein</keyword>
<keyword id="KW-0689">Ribosomal protein</keyword>
<keyword id="KW-0694">RNA-binding</keyword>
<keyword id="KW-0699">rRNA-binding</keyword>
<keyword id="KW-0820">tRNA-binding</keyword>
<organism>
    <name type="scientific">Streptococcus pyogenes serotype M6 (strain ATCC BAA-946 / MGAS10394)</name>
    <dbReference type="NCBI Taxonomy" id="286636"/>
    <lineage>
        <taxon>Bacteria</taxon>
        <taxon>Bacillati</taxon>
        <taxon>Bacillota</taxon>
        <taxon>Bacilli</taxon>
        <taxon>Lactobacillales</taxon>
        <taxon>Streptococcaceae</taxon>
        <taxon>Streptococcus</taxon>
    </lineage>
</organism>
<comment type="function">
    <text evidence="1">Binds 23S rRNA and is also seen to make contacts with the A and possibly P site tRNAs.</text>
</comment>
<comment type="subunit">
    <text evidence="1">Part of the 50S ribosomal subunit.</text>
</comment>
<comment type="similarity">
    <text evidence="1">Belongs to the universal ribosomal protein uL16 family.</text>
</comment>
<protein>
    <recommendedName>
        <fullName evidence="1">Large ribosomal subunit protein uL16</fullName>
    </recommendedName>
    <alternativeName>
        <fullName evidence="2">50S ribosomal protein L16</fullName>
    </alternativeName>
</protein>
<evidence type="ECO:0000255" key="1">
    <source>
        <dbReference type="HAMAP-Rule" id="MF_01342"/>
    </source>
</evidence>
<evidence type="ECO:0000305" key="2"/>
<gene>
    <name evidence="1" type="primary">rplP</name>
    <name type="ordered locus">M6_Spy0100</name>
</gene>
<accession>Q5XEC8</accession>
<reference key="1">
    <citation type="journal article" date="2004" name="J. Infect. Dis.">
        <title>Progress toward characterization of the group A Streptococcus metagenome: complete genome sequence of a macrolide-resistant serotype M6 strain.</title>
        <authorList>
            <person name="Banks D.J."/>
            <person name="Porcella S.F."/>
            <person name="Barbian K.D."/>
            <person name="Beres S.B."/>
            <person name="Philips L.E."/>
            <person name="Voyich J.M."/>
            <person name="DeLeo F.R."/>
            <person name="Martin J.M."/>
            <person name="Somerville G.A."/>
            <person name="Musser J.M."/>
        </authorList>
    </citation>
    <scope>NUCLEOTIDE SEQUENCE [LARGE SCALE GENOMIC DNA]</scope>
    <source>
        <strain>ATCC BAA-946 / MGAS10394</strain>
    </source>
</reference>
<sequence>MLVPKRVKHRREFRGKMRGEAKGGKEVSFGEYGLQATTSHWITNRQIEAARIAMTRYMKRGGKVWIKIFPHKSYTAKAIGVRMGSGKGAPEGWVAPVKRGKVMFEIAGVSEEIAREALRLASHKLPVKCKFVKREAE</sequence>
<dbReference type="EMBL" id="CP000003">
    <property type="protein sequence ID" value="AAT86235.1"/>
    <property type="molecule type" value="Genomic_DNA"/>
</dbReference>
<dbReference type="RefSeq" id="WP_002986644.1">
    <property type="nucleotide sequence ID" value="NC_006086.1"/>
</dbReference>
<dbReference type="SMR" id="Q5XEC8"/>
<dbReference type="GeneID" id="69900033"/>
<dbReference type="KEGG" id="spa:M6_Spy0100"/>
<dbReference type="HOGENOM" id="CLU_078858_2_1_9"/>
<dbReference type="Proteomes" id="UP000001167">
    <property type="component" value="Chromosome"/>
</dbReference>
<dbReference type="GO" id="GO:0022625">
    <property type="term" value="C:cytosolic large ribosomal subunit"/>
    <property type="evidence" value="ECO:0007669"/>
    <property type="project" value="TreeGrafter"/>
</dbReference>
<dbReference type="GO" id="GO:0019843">
    <property type="term" value="F:rRNA binding"/>
    <property type="evidence" value="ECO:0007669"/>
    <property type="project" value="UniProtKB-UniRule"/>
</dbReference>
<dbReference type="GO" id="GO:0003735">
    <property type="term" value="F:structural constituent of ribosome"/>
    <property type="evidence" value="ECO:0007669"/>
    <property type="project" value="InterPro"/>
</dbReference>
<dbReference type="GO" id="GO:0000049">
    <property type="term" value="F:tRNA binding"/>
    <property type="evidence" value="ECO:0007669"/>
    <property type="project" value="UniProtKB-KW"/>
</dbReference>
<dbReference type="GO" id="GO:0006412">
    <property type="term" value="P:translation"/>
    <property type="evidence" value="ECO:0007669"/>
    <property type="project" value="UniProtKB-UniRule"/>
</dbReference>
<dbReference type="CDD" id="cd01433">
    <property type="entry name" value="Ribosomal_L16_L10e"/>
    <property type="match status" value="1"/>
</dbReference>
<dbReference type="FunFam" id="3.90.1170.10:FF:000001">
    <property type="entry name" value="50S ribosomal protein L16"/>
    <property type="match status" value="1"/>
</dbReference>
<dbReference type="Gene3D" id="3.90.1170.10">
    <property type="entry name" value="Ribosomal protein L10e/L16"/>
    <property type="match status" value="1"/>
</dbReference>
<dbReference type="HAMAP" id="MF_01342">
    <property type="entry name" value="Ribosomal_uL16"/>
    <property type="match status" value="1"/>
</dbReference>
<dbReference type="InterPro" id="IPR047873">
    <property type="entry name" value="Ribosomal_uL16"/>
</dbReference>
<dbReference type="InterPro" id="IPR000114">
    <property type="entry name" value="Ribosomal_uL16_bact-type"/>
</dbReference>
<dbReference type="InterPro" id="IPR020798">
    <property type="entry name" value="Ribosomal_uL16_CS"/>
</dbReference>
<dbReference type="InterPro" id="IPR016180">
    <property type="entry name" value="Ribosomal_uL16_dom"/>
</dbReference>
<dbReference type="InterPro" id="IPR036920">
    <property type="entry name" value="Ribosomal_uL16_sf"/>
</dbReference>
<dbReference type="NCBIfam" id="TIGR01164">
    <property type="entry name" value="rplP_bact"/>
    <property type="match status" value="1"/>
</dbReference>
<dbReference type="PANTHER" id="PTHR12220">
    <property type="entry name" value="50S/60S RIBOSOMAL PROTEIN L16"/>
    <property type="match status" value="1"/>
</dbReference>
<dbReference type="PANTHER" id="PTHR12220:SF13">
    <property type="entry name" value="LARGE RIBOSOMAL SUBUNIT PROTEIN UL16M"/>
    <property type="match status" value="1"/>
</dbReference>
<dbReference type="Pfam" id="PF00252">
    <property type="entry name" value="Ribosomal_L16"/>
    <property type="match status" value="1"/>
</dbReference>
<dbReference type="PRINTS" id="PR00060">
    <property type="entry name" value="RIBOSOMALL16"/>
</dbReference>
<dbReference type="SUPFAM" id="SSF54686">
    <property type="entry name" value="Ribosomal protein L16p/L10e"/>
    <property type="match status" value="1"/>
</dbReference>
<dbReference type="PROSITE" id="PS00586">
    <property type="entry name" value="RIBOSOMAL_L16_1"/>
    <property type="match status" value="1"/>
</dbReference>
<dbReference type="PROSITE" id="PS00701">
    <property type="entry name" value="RIBOSOMAL_L16_2"/>
    <property type="match status" value="1"/>
</dbReference>
<feature type="chain" id="PRO_0000062223" description="Large ribosomal subunit protein uL16">
    <location>
        <begin position="1"/>
        <end position="137"/>
    </location>
</feature>